<keyword id="KW-0007">Acetylation</keyword>
<keyword id="KW-0010">Activator</keyword>
<keyword id="KW-0025">Alternative splicing</keyword>
<keyword id="KW-0037">Angiogenesis</keyword>
<keyword id="KW-0053">Apoptosis</keyword>
<keyword id="KW-0072">Autophagy</keyword>
<keyword id="KW-0165">Cleavage on pair of basic residues</keyword>
<keyword id="KW-0963">Cytoplasm</keyword>
<keyword id="KW-0217">Developmental protein</keyword>
<keyword id="KW-0221">Differentiation</keyword>
<keyword id="KW-0238">DNA-binding</keyword>
<keyword id="KW-0256">Endoplasmic reticulum</keyword>
<keyword id="KW-0444">Lipid biosynthesis</keyword>
<keyword id="KW-0443">Lipid metabolism</keyword>
<keyword id="KW-0472">Membrane</keyword>
<keyword id="KW-0517">Myogenesis</keyword>
<keyword id="KW-0539">Nucleus</keyword>
<keyword id="KW-0597">Phosphoprotein</keyword>
<keyword id="KW-0653">Protein transport</keyword>
<keyword id="KW-1185">Reference proteome</keyword>
<keyword id="KW-0735">Signal-anchor</keyword>
<keyword id="KW-0346">Stress response</keyword>
<keyword id="KW-0804">Transcription</keyword>
<keyword id="KW-0805">Transcription regulation</keyword>
<keyword id="KW-0812">Transmembrane</keyword>
<keyword id="KW-1133">Transmembrane helix</keyword>
<keyword id="KW-0813">Transport</keyword>
<keyword id="KW-0832">Ubl conjugation</keyword>
<keyword id="KW-0834">Unfolded protein response</keyword>
<accession>O35426</accession>
<accession>Q8VHM0</accession>
<accession>Q922G5</accession>
<accession>Q9ESS3</accession>
<gene>
    <name evidence="1 33" type="primary">Xbp1</name>
    <name evidence="29" type="synonym">Treb5</name>
</gene>
<sequence length="267" mass="29619">MVVVAAAPSAATAAPKVLLLSGQPASGGRALPLMVPGPRAAGSEASGTPQARKRQRLTHLSPEEKALRRKLKNRVAAQTARDRKKARMSELEQQVVDLEEENHKLQLENQLLREKTHGLVVENQELRTRLGMDTLDPDEVPEVEAKGSGVRLVAGSAESAALRLCAPLQQVQAQLSPPQNIFPWTLTLLPLQILSLISFWAFWTSWTLSCFSNVLPQSLLVWRNSQRSTQKDLVPYQPPFLCQWGPHQPSWKPLMNSFVLTMYTPSL</sequence>
<proteinExistence type="evidence at protein level"/>
<comment type="function">
    <text evidence="1 5 6 12 14 16 24">Functions as a transcription factor during endoplasmic reticulum stress by regulating the unfolded protein response (UPR). Required for cardiac myogenesis and hepatogenesis during embryonic development and the development of secretory tissues such as exocrine pancreas and salivary gland (PubMed:10425189, PubMed:10652269, PubMed:16362047, PubMed:17612490). Involved in differentiation of B lymphocytes to plasma cells and production of immunoglobulins. Modulates the cellular response to ER stress in a PIK3R-dependent manner. Binds to the cis-acting X box present in the promoter regions of major histocompatibility complex class II genes (By similarity). Involved in VEGF-induced endothelial cell (EC) proliferation and retinal blood vessel formation during embryonic development but also for angiogenesis in adult tissues under ischemic conditions (PubMed:23529610). Also functions as a major regulator of the UPR in obesity-induced insulin resistance and type 2 diabetes for the management of obesity and diabetes prevention (PubMed:15486293).</text>
</comment>
<comment type="function">
    <molecule>Isoform 1</molecule>
    <text evidence="1 10 13">Plays a role in the unconventional cytoplasmic splicing processing of its own mRNA triggered by the endoplasmic reticulum (ER) transmembrane endoribonuclease ERN1: upon ER stress, the emerging XBP1 polypeptide chain, as part of a mRNA-ribosome-nascent chain (R-RNC) complex, cotranslationally recruits its own unprocessed mRNA through transient docking to the ER membrane and translational pausing, therefore facilitating efficient IRE1-mediated XBP1 mRNA isoform 2 production. In endothelial cells (EC), associated with KDR, promotes IRE1-mediated XBP1 mRNA isoform 2 production in a vascular endothelial growth factor (VEGF)-dependent manner, leading to EC proliferation and angiogenesis (By similarity). Functions as a negative feed-back regulator of the potent transcription factor XBP1 isoform 2 protein levels through proteasome-mediated degradation, thus preventing the constitutive activation of the ER stress response signaling pathway (PubMed:16332684). Inhibits the transactivation activity of XBP1 isoform 2 in myeloma cells (PubMed:12902539). Acts as a weak transcriptional factor. Together with HDAC3, contributes to the activation of NFE2L2-mediated HMOX1 transcription factor gene expression in a PI(3)K/mTORC2/Akt-dependent signaling pathway leading to EC survival under disturbed flow/oxidative stress. Binds to the ER stress response element (ERSE) upon ER stress. Binds to the consensus 5'-GATGACGTG[TG]N(3)[AT]T-3' sequence related to cAMP responsive element (CRE)-like sequences. Binds the Tax-responsive element (TRE) present in the long terminal repeat (LTR) of T-cell leukemia virus type 1 (HTLV-I) and to the TPA response elements (TRE). Associates preferentially to the HDAC3 gene promoter region in a static flow-dependent manner. Binds to the CDH5/VE-cadherin gene promoter region (By similarity).</text>
</comment>
<comment type="function">
    <molecule>Isoform 2</molecule>
    <text evidence="1 8 9 10 11 15 17 20 22 25 26 27">Functions as a stress-inducible potent transcriptional activator during endoplasmic reticulum (ER) stress by inducing unfolded protein response (UPR) target genes via binding to the UPR element (UPRE). Up-regulates target genes encoding ER chaperones and ER-associated degradation (ERAD) components to enhance the capacity of productive folding and degradation mechanism, respectively, in order to maintain the homeostasis of the ER under ER stress (PubMed:11850408, PubMed:14559994). Plays a role in the production of immunoglobulins and interleukin-6 in the presence of stimuli required for plasma cell differentiation, and promotes as well membrane phospholipid biosynthesis necessary for ER expansion (PubMed:12612580, PubMed:17213183). Contributes to the VEGF-induced endothelial cell (EC) growth and proliferation in a Akt/GSK-dependent and/or -independent signaling pathway, respectively, leading to beta-catenin nuclear translocation and E2F2 gene expression. Promotes umbilical vein EC apoptosis and atherosclerotisis development in a caspase-dependent signaling pathway, and contributes to VEGF-induced EC proliferation and angiogenesis in adult tissues under ischemic conditions. Involved in the regulation of endostatin-induced autophagy in EC through BECN1 transcriptional activation. Plays a role as an oncogene by promoting tumor progression: stimulates zinc finger protein SNAI1 transcription to induce epithelial-to-mesenchymal (EMT) transition, cell migration and invasion of breast cancer cells (By similarity). Involved in adipocyte differentiation by regulating lipogenic gene expression during lactation (PubMed:23623498, PubMed:25223794). Plays a role in the survival of both dopaminergic neurons of the substantia nigra pars compacta (SNpc), by maintaining protein homeostasis and of myeloma cells (PubMed:12902539, PubMed:24753614). Increases insulin sensitivity in the liver as a response to a high carbohydrate diet, resulting in improved glucose tolerance (PubMed:20348926). Also improves glucose homeostasis in an ER stress- and/or insulin-independent manner through both binding and proteasome-induced degradation of the transcription factor FOXO1, hence resulting in suppression of gluconeogenic genes expression and in a reduction of blood glucose levels (PubMed:21317886). Controls the induction of de novo fatty acid synthesis in hepatocytes by regulating the expression of a subset of lipogenic genes in an ER stress- and UPR-independent manner (PubMed:18556558). Binds to the 5'-CCACG-3' motif in the PPARG promoter (PubMed:25223794). Associates preferentially to the HDAC3 gene promoter region in a disturbed flow-dependent manner. Binds to the BECN1 gene promoter region. Binds to the CDH5/VE-cadherin gene promoter region. Binds to the ER stress response element (ERSE) upon ER stress (By similarity).</text>
</comment>
<comment type="subunit">
    <text evidence="1 20 21 22">Isoform 1 interacts with HM13. Isoform 1 interacts with RNF139; the interaction induces ubiquitination and degradation of isoform 1. Isoform 1 interacts (via luminal domain) with DERL1; the interaction obviates the need for ectodomain shedding prior HM13/SPP-mediated XBP1 isoform 1 cleavage. Isoform 1 interacts with isoform 2; the interaction sequesters isoform 2 from the nucleus and enhances isoform 2 degradation in the cytoplasm. Isoform 1 interacts with HDAC3 and AKT1; the interactions occur in endothelial cell (EC) under disturbed flow. Isoform 1 interacts with the oncoprotein FOS. Isoform 2 interacts with ATF6; the interaction occurs in a ER stress-dependent manner and is required for DNA binding to the unfolded protein response element (UPRE). Isoform 2 interacts with PIK3R1; the interaction is direct and induces translocation of XBP1 isoform 2 into the nucleus and the unfolded protein response (UPR) XBP1-dependent target genes activation in a ER stress- and/or insulin-dependent but PI3K-independent manner (By similarity). Isoform 2 interacts with SIRT1 (PubMed:20955178). Isoform 2 interacts with PIK3R1 and PIK3R2; the interactions are direct and induce translocation of XBP1 isoform 2 into the nucleus and the unfolded protein response (UPR) XBP1-dependent target genes activation in a ER stress- and/or insulin-dependent but PI3K-independent manner (PubMed:20348926). Isoform 2 interacts with FOXO1; the interaction is direct and leads to FOXO1 ubiquitination and degradation via the proteasome pathway in hepatocytes (PubMed:21317886).</text>
</comment>
<comment type="subcellular location">
    <subcellularLocation>
        <location evidence="1">Endoplasmic reticulum</location>
    </subcellularLocation>
    <text evidence="1">Colocalizes with ERN1 and KDR in the endoplasmic reticulum in endothelial cells in a vascular endothelial growth factor (VEGF)-dependent manner (By similarity).</text>
</comment>
<comment type="subcellular location">
    <molecule>Isoform 1</molecule>
    <subcellularLocation>
        <location evidence="13">Nucleus</location>
    </subcellularLocation>
    <subcellularLocation>
        <location evidence="13">Cytoplasm</location>
    </subcellularLocation>
    <subcellularLocation>
        <location evidence="1">Endoplasmic reticulum membrane</location>
        <topology evidence="1">Single-pass type II membrane protein</topology>
    </subcellularLocation>
    <subcellularLocation>
        <location evidence="1">Endoplasmic reticulum membrane</location>
        <topology evidence="1">Peripheral membrane protein</topology>
    </subcellularLocation>
    <subcellularLocation>
        <location evidence="1">Membrane</location>
        <topology evidence="1">Peripheral membrane protein</topology>
    </subcellularLocation>
    <text evidence="1 13">Shuttles between the nucleus and the cytoplasm in a CRM1-dependent manner. Localizes predominantly at the endoplasmic reticulum membrane as a membrane-spanning protein; whereas may be only marginally localized on the cytosolic side of the ER membrane as a peripheral membrane (By similarity). Shows no preferential localization to either the nucleus or the cytoplasm (PubMed:16332684).</text>
</comment>
<comment type="subcellular location">
    <molecule>Isoform 2</molecule>
    <subcellularLocation>
        <location evidence="13 17 20 21">Nucleus</location>
    </subcellularLocation>
    <subcellularLocation>
        <location evidence="13">Cytoplasm</location>
    </subcellularLocation>
    <text evidence="13 17 20 21">Localizes predominantly in the nucleus (PubMed:16332684). Colocalizes in the nucleus with SIRT1 (PubMed:20955178). Translocates into the nucleus in a PIK3R-, ER stress-induced- and/or insulin-dependent manner (PubMed:20348926).</text>
</comment>
<comment type="subcellular location">
    <molecule>X-box-binding protein 1, cytoplasmic form</molecule>
    <subcellularLocation>
        <location evidence="1">Cytoplasm</location>
    </subcellularLocation>
    <subcellularLocation>
        <location evidence="1">Nucleus</location>
    </subcellularLocation>
    <text evidence="1">Localizes in the cytoplasm and nucleus after HM13/SPP-mediated intramembranaire proteolytic cleavage of isoform 1 (By similarity).</text>
</comment>
<comment type="alternative products">
    <event type="alternative splicing"/>
    <isoform>
        <id>O35426-1</id>
        <name>1</name>
        <name>Unprocessed XBP-1</name>
        <name evidence="30">XBP-1U</name>
        <sequence type="displayed"/>
    </isoform>
    <isoform>
        <id>O35426-2</id>
        <name>2</name>
        <name>Processed XBP-1</name>
        <name evidence="30">XBP-1S</name>
        <sequence type="described" ref="VSP_012937"/>
    </isoform>
</comment>
<comment type="tissue specificity">
    <text evidence="16 19 25">Isoform 1 and isoform 2 are expressed at higher level in branch curves of vessel walls and in atherosclerotic plaques relative to healthy segments of the same aortas (at protein level) (PubMed:19416856). Expressed in skeletal muscles, plasma cells and pancreatic beta cells (PubMed:17612490). Isoform 1 and isoform 2 are expressed in gonadal adipose tissue. Isoform 1 is expressed in inguinal adipose tissue (PubMed:23623498).</text>
</comment>
<comment type="developmental stage">
    <text evidence="28">Expressed mainly in exocrine glands and bone precursors in the embryonic mouse (PubMed:7693055).</text>
</comment>
<comment type="induction">
    <text evidence="6 7 8 9 16 17 20 25 27">Isoform 2 is up-regulated during adipocyte differentiation (PubMed:25223794). Isoform 2 is up-regulated upon refeeding after a fasting period in liver and in ob/ob mice (obese) (at protein level) (PubMed:20348926). Induced by chemical activators of the unfolded protein response (UPR) such as tunicamycin, DTT and thapsigargin (PubMed:17612490). Up-regulated after partial hepatectomy during the acute phase response (PubMed:10652269). Isoform 1 and isoform 2 are up-regulated by interleukin-4 in B cells in a STAT6-dependent manner (PubMed:12612580). Isoform 1 and isoform 2 are up-regulated during lactation and by the lactogenic hormone prolactin (PubMed:23623498). Isoform 2 is up-regulated by prolonged feeding of high-carbohydrate diets in hepatocytes in absence of ER-stress (PubMed:18556558). Isoform 2 is up-regulated by insulin-like growth factor and glucose starvation (PubMed:17612490). Isoform 2 is up-regulated during plasma-cell differentiation in response to endoplasmic reticulum (ER) stress, such as lipopolysaccharide (LPS) (PubMed:11780124, PubMed:11850408, PubMed:12612580).</text>
</comment>
<comment type="domain">
    <text evidence="1 13">Isoform 1 transmembrane signal-anchor domain is necessary for its own mRNA to be recruited to the endoplasmic reticulum (ER) which will undergo unconventional ERN1-dependent splicing in response to ER stress. Isoform 1 N-terminus and C-terminus regions are necessary for DNA-binding and weak transcriptional activity, respectively. Isoform 2 N-terminus and C-terminus regions are necessary for DNA-binding and strong transcriptional activity upon ER stress, respectively. Isoform 2 C-terminus region contains a nuclear exclusion signal (NES) at positions 182 through 204. Isoform 2 C-terminus region contains a degradation domain at positions 204 through 256 (By similarity). Isoform 1 and isoform 2 N-terminus domains are necessary for nuclear localization targeting. Isoform 1 C-terminus domain confers localization to the cytoplasm and is sufficient to impose rapid degradation (PubMed:16332684).</text>
</comment>
<comment type="PTM">
    <molecule>Isoform 2</molecule>
    <text evidence="21 32">Acetylated by EP300; acetylation positively regulates the transcriptional activity of XBP1 isoform 2 (PubMed:20955178). Isoform 2 is deacetylated by SIRT1; deacetylation negatively regulates the transcriptional activity of XBP1 isoform 2 (PubMed:20955178).</text>
</comment>
<comment type="PTM">
    <molecule>Isoform 1</molecule>
    <text evidence="1 7 10 13">Ubiquitinated, leading to proteasomal degradation in response to ER stress (PubMed:11780124, PubMed:12902539, PubMed:16332684).</text>
</comment>
<comment type="PTM">
    <text evidence="1">X-box-binding protein 1, cytoplasmic form and luminal form are produced by intramembrane proteolytic cleavage of ER membrane-anchored isoform 1 triggered by HM13/SPP in a DERL1-RNF139-dependent and VCP/p97-independent manner. X-box-binding protein 1, luminal form is ubiquitinated leading to proteasomal degradation (By similarity).</text>
</comment>
<comment type="disruption phenotype">
    <text evidence="5 6 12 14 17 18 23 24 25 26">Mice embryos die at 12.5-13.5 dpc and display less blood vessels (PubMed:23529610). Embryos display hypoplastic livers, cellular necrosis in the myocardium, hypoplasia of the heart and die in utero from severe anemia (PubMed:10425189, PubMed:10652269). Mice display severe abnormalities in the development and function of secretory cells, such as plasma B cells and pancreatic acinar cells (PubMed:16362047). Haploinsufficient mice fed a high-fat diet gain more weight, display enhanced ER stress in adipose tissue, reduced insulin receptor signaling and develop peripheral insulin resistance and type 2 diabetes (PubMed:15486293). Endothelial-specific knockout mice show delayed retinal vascular development and impaired postischemic angiogenesis (PubMed:23184933, PubMed:23529610). Dopaminergic neuron-specific knockout mice display ER dysfunction and accumulation of abnormal protein aggregates (PubMed:24753614). Liver-specific knockout mice leads to reduced lipogenic gene expression and diminished hepatic lipid synthesis (PubMed:18556558). Adipocyte-specific knockout female mice fed with a regular or high-fat diet, show no alteration in body weight, adipose tissue mass, blood glucose, serum insulin and lipid levels; however during lactation adipose tissue mass increases and milk production decreases but mammary gland structure and milk composition remains normal (PubMed:23623498). Intestinal epithelial cell-specific knockout mice born and developed normally but displayed small intestinal mucosal inflammation in association with increased ER stress, a diminution of Paneth and goblet cells with reduced secretory granules (PubMed:18775308).</text>
</comment>
<comment type="miscellaneous">
    <molecule>Isoform 2</molecule>
    <text evidence="7 8">Potent transcriptional activator. Induced by unconventional ERN1-dependent splicing in response to endoplasmic reticulum stress. ERN1 cleaves a 26-bp fragment causing a frameshift of the mRNA transcript (PubMed:11780124, PubMed:11850408).</text>
</comment>
<comment type="similarity">
    <text evidence="31">Belongs to the bZIP family.</text>
</comment>
<name>XBP1_MOUSE</name>
<organism>
    <name type="scientific">Mus musculus</name>
    <name type="common">Mouse</name>
    <dbReference type="NCBI Taxonomy" id="10090"/>
    <lineage>
        <taxon>Eukaryota</taxon>
        <taxon>Metazoa</taxon>
        <taxon>Chordata</taxon>
        <taxon>Craniata</taxon>
        <taxon>Vertebrata</taxon>
        <taxon>Euteleostomi</taxon>
        <taxon>Mammalia</taxon>
        <taxon>Eutheria</taxon>
        <taxon>Euarchontoglires</taxon>
        <taxon>Glires</taxon>
        <taxon>Rodentia</taxon>
        <taxon>Myomorpha</taxon>
        <taxon>Muroidea</taxon>
        <taxon>Muridae</taxon>
        <taxon>Murinae</taxon>
        <taxon>Mus</taxon>
        <taxon>Mus</taxon>
    </lineage>
</organism>
<protein>
    <recommendedName>
        <fullName evidence="1 33">X-box-binding protein 1</fullName>
        <shortName evidence="1">XBP-1</shortName>
    </recommendedName>
    <alternativeName>
        <fullName evidence="29">Tax-responsive element-binding protein 5</fullName>
        <shortName evidence="31">TREB-5</shortName>
    </alternativeName>
    <component>
        <recommendedName>
            <fullName evidence="1">X-box-binding protein 1, cytoplasmic form</fullName>
        </recommendedName>
    </component>
    <component>
        <recommendedName>
            <fullName evidence="1">X-box-binding protein 1, luminal form</fullName>
        </recommendedName>
    </component>
</protein>
<dbReference type="EMBL" id="AB036745">
    <property type="protein sequence ID" value="BAB13793.1"/>
    <property type="molecule type" value="Genomic_DNA"/>
</dbReference>
<dbReference type="EMBL" id="AF443192">
    <property type="protein sequence ID" value="AAL60202.1"/>
    <property type="molecule type" value="mRNA"/>
</dbReference>
<dbReference type="EMBL" id="AF027963">
    <property type="protein sequence ID" value="AAB81862.2"/>
    <property type="molecule type" value="mRNA"/>
</dbReference>
<dbReference type="EMBL" id="AL662876">
    <property type="status" value="NOT_ANNOTATED_CDS"/>
    <property type="molecule type" value="Genomic_DNA"/>
</dbReference>
<dbReference type="EMBL" id="BC008153">
    <property type="protein sequence ID" value="AAH08153.1"/>
    <property type="molecule type" value="mRNA"/>
</dbReference>
<dbReference type="EMBL" id="BC029197">
    <property type="protein sequence ID" value="AAH29197.1"/>
    <property type="molecule type" value="mRNA"/>
</dbReference>
<dbReference type="CCDS" id="CCDS24400.1">
    <molecule id="O35426-1"/>
</dbReference>
<dbReference type="PIR" id="JC7300">
    <property type="entry name" value="JC7300"/>
</dbReference>
<dbReference type="RefSeq" id="NP_001258659.1">
    <molecule id="O35426-2"/>
    <property type="nucleotide sequence ID" value="NM_001271730.1"/>
</dbReference>
<dbReference type="RefSeq" id="NP_038870.2">
    <molecule id="O35426-1"/>
    <property type="nucleotide sequence ID" value="NM_013842.3"/>
</dbReference>
<dbReference type="SMR" id="O35426"/>
<dbReference type="BioGRID" id="204589">
    <property type="interactions" value="12"/>
</dbReference>
<dbReference type="FunCoup" id="O35426">
    <property type="interactions" value="599"/>
</dbReference>
<dbReference type="IntAct" id="O35426">
    <property type="interactions" value="1"/>
</dbReference>
<dbReference type="STRING" id="10090.ENSMUSP00000054852"/>
<dbReference type="GlyGen" id="O35426">
    <property type="glycosylation" value="1 site, 1 O-linked glycan (1 site)"/>
</dbReference>
<dbReference type="iPTMnet" id="O35426"/>
<dbReference type="PhosphoSitePlus" id="O35426"/>
<dbReference type="PaxDb" id="10090-ENSMUSP00000054852"/>
<dbReference type="ProteomicsDB" id="297567">
    <molecule id="O35426-1"/>
</dbReference>
<dbReference type="ProteomicsDB" id="297568">
    <molecule id="O35426-2"/>
</dbReference>
<dbReference type="Antibodypedia" id="10221">
    <property type="antibodies" value="697 antibodies from 42 providers"/>
</dbReference>
<dbReference type="DNASU" id="22433"/>
<dbReference type="Ensembl" id="ENSMUST00000063084.16">
    <molecule id="O35426-1"/>
    <property type="protein sequence ID" value="ENSMUSP00000054852.10"/>
    <property type="gene ID" value="ENSMUSG00000020484.20"/>
</dbReference>
<dbReference type="Ensembl" id="ENSMUST00000239150.3">
    <molecule id="O35426-2"/>
    <property type="protein sequence ID" value="ENSMUSP00000158915.3"/>
    <property type="gene ID" value="ENSMUSG00000020484.20"/>
</dbReference>
<dbReference type="GeneID" id="22433"/>
<dbReference type="KEGG" id="mmu:22433"/>
<dbReference type="UCSC" id="uc007hwm.2">
    <molecule id="O35426-2"/>
    <property type="organism name" value="mouse"/>
</dbReference>
<dbReference type="UCSC" id="uc007hwn.2">
    <molecule id="O35426-1"/>
    <property type="organism name" value="mouse"/>
</dbReference>
<dbReference type="AGR" id="MGI:98970"/>
<dbReference type="CTD" id="7494"/>
<dbReference type="MGI" id="MGI:98970">
    <property type="gene designation" value="Xbp1"/>
</dbReference>
<dbReference type="VEuPathDB" id="HostDB:ENSMUSG00000020484"/>
<dbReference type="eggNOG" id="KOG4005">
    <property type="taxonomic scope" value="Eukaryota"/>
</dbReference>
<dbReference type="GeneTree" id="ENSGT00390000017751"/>
<dbReference type="HOGENOM" id="CLU_093516_0_0_1"/>
<dbReference type="InParanoid" id="O35426"/>
<dbReference type="OMA" id="TMSLICC"/>
<dbReference type="OrthoDB" id="88955at9989"/>
<dbReference type="PhylomeDB" id="O35426"/>
<dbReference type="TreeFam" id="TF319837"/>
<dbReference type="BioGRID-ORCS" id="22433">
    <property type="hits" value="7 hits in 85 CRISPR screens"/>
</dbReference>
<dbReference type="ChiTaRS" id="Xbp1">
    <property type="organism name" value="mouse"/>
</dbReference>
<dbReference type="PRO" id="PR:O35426"/>
<dbReference type="Proteomes" id="UP000000589">
    <property type="component" value="Chromosome 11"/>
</dbReference>
<dbReference type="RNAct" id="O35426">
    <property type="molecule type" value="protein"/>
</dbReference>
<dbReference type="Bgee" id="ENSMUSG00000020484">
    <property type="expression patterns" value="Expressed in lacrimal gland and 301 other cell types or tissues"/>
</dbReference>
<dbReference type="ExpressionAtlas" id="O35426">
    <property type="expression patterns" value="baseline and differential"/>
</dbReference>
<dbReference type="GO" id="GO:0005737">
    <property type="term" value="C:cytoplasm"/>
    <property type="evidence" value="ECO:0000314"/>
    <property type="project" value="UniProtKB"/>
</dbReference>
<dbReference type="GO" id="GO:0005829">
    <property type="term" value="C:cytosol"/>
    <property type="evidence" value="ECO:0000250"/>
    <property type="project" value="UniProtKB"/>
</dbReference>
<dbReference type="GO" id="GO:0005783">
    <property type="term" value="C:endoplasmic reticulum"/>
    <property type="evidence" value="ECO:0000250"/>
    <property type="project" value="UniProtKB"/>
</dbReference>
<dbReference type="GO" id="GO:0005789">
    <property type="term" value="C:endoplasmic reticulum membrane"/>
    <property type="evidence" value="ECO:0000250"/>
    <property type="project" value="UniProtKB"/>
</dbReference>
<dbReference type="GO" id="GO:0005634">
    <property type="term" value="C:nucleus"/>
    <property type="evidence" value="ECO:0000314"/>
    <property type="project" value="UniProtKB"/>
</dbReference>
<dbReference type="GO" id="GO:0090575">
    <property type="term" value="C:RNA polymerase II transcription regulator complex"/>
    <property type="evidence" value="ECO:0007669"/>
    <property type="project" value="Ensembl"/>
</dbReference>
<dbReference type="GO" id="GO:0031490">
    <property type="term" value="F:chromatin DNA binding"/>
    <property type="evidence" value="ECO:0000250"/>
    <property type="project" value="UniProtKB"/>
</dbReference>
<dbReference type="GO" id="GO:0000987">
    <property type="term" value="F:cis-regulatory region sequence-specific DNA binding"/>
    <property type="evidence" value="ECO:0000250"/>
    <property type="project" value="UniProtKB"/>
</dbReference>
<dbReference type="GO" id="GO:0003700">
    <property type="term" value="F:DNA-binding transcription factor activity"/>
    <property type="evidence" value="ECO:0000314"/>
    <property type="project" value="ParkinsonsUK-UCL"/>
</dbReference>
<dbReference type="GO" id="GO:0000981">
    <property type="term" value="F:DNA-binding transcription factor activity, RNA polymerase II-specific"/>
    <property type="evidence" value="ECO:0000314"/>
    <property type="project" value="MGI"/>
</dbReference>
<dbReference type="GO" id="GO:0042826">
    <property type="term" value="F:histone deacetylase binding"/>
    <property type="evidence" value="ECO:0000353"/>
    <property type="project" value="UniProtKB"/>
</dbReference>
<dbReference type="GO" id="GO:0042802">
    <property type="term" value="F:identical protein binding"/>
    <property type="evidence" value="ECO:0007669"/>
    <property type="project" value="Ensembl"/>
</dbReference>
<dbReference type="GO" id="GO:0036312">
    <property type="term" value="F:phosphatidylinositol 3-kinase regulatory subunit binding"/>
    <property type="evidence" value="ECO:0000353"/>
    <property type="project" value="UniProtKB"/>
</dbReference>
<dbReference type="GO" id="GO:0046982">
    <property type="term" value="F:protein heterodimerization activity"/>
    <property type="evidence" value="ECO:0000250"/>
    <property type="project" value="UniProtKB"/>
</dbReference>
<dbReference type="GO" id="GO:0000978">
    <property type="term" value="F:RNA polymerase II cis-regulatory region sequence-specific DNA binding"/>
    <property type="evidence" value="ECO:0000314"/>
    <property type="project" value="UniProtKB"/>
</dbReference>
<dbReference type="GO" id="GO:0000977">
    <property type="term" value="F:RNA polymerase II transcription regulatory region sequence-specific DNA binding"/>
    <property type="evidence" value="ECO:0000250"/>
    <property type="project" value="UniProtKB"/>
</dbReference>
<dbReference type="GO" id="GO:0061629">
    <property type="term" value="F:RNA polymerase II-specific DNA-binding transcription factor binding"/>
    <property type="evidence" value="ECO:0000353"/>
    <property type="project" value="MGI"/>
</dbReference>
<dbReference type="GO" id="GO:0043565">
    <property type="term" value="F:sequence-specific DNA binding"/>
    <property type="evidence" value="ECO:0000314"/>
    <property type="project" value="ParkinsonsUK-UCL"/>
</dbReference>
<dbReference type="GO" id="GO:0000976">
    <property type="term" value="F:transcription cis-regulatory region binding"/>
    <property type="evidence" value="ECO:0000314"/>
    <property type="project" value="UniProtKB"/>
</dbReference>
<dbReference type="GO" id="GO:0044389">
    <property type="term" value="F:ubiquitin-like protein ligase binding"/>
    <property type="evidence" value="ECO:0000353"/>
    <property type="project" value="ParkinsonsUK-UCL"/>
</dbReference>
<dbReference type="GO" id="GO:0060612">
    <property type="term" value="P:adipose tissue development"/>
    <property type="evidence" value="ECO:0000315"/>
    <property type="project" value="UniProtKB"/>
</dbReference>
<dbReference type="GO" id="GO:0001525">
    <property type="term" value="P:angiogenesis"/>
    <property type="evidence" value="ECO:0000315"/>
    <property type="project" value="UniProtKB"/>
</dbReference>
<dbReference type="GO" id="GO:0006914">
    <property type="term" value="P:autophagy"/>
    <property type="evidence" value="ECO:0007669"/>
    <property type="project" value="UniProtKB-KW"/>
</dbReference>
<dbReference type="GO" id="GO:0071230">
    <property type="term" value="P:cellular response to amino acid stimulus"/>
    <property type="evidence" value="ECO:0000314"/>
    <property type="project" value="UniProtKB"/>
</dbReference>
<dbReference type="GO" id="GO:0071498">
    <property type="term" value="P:cellular response to fluid shear stress"/>
    <property type="evidence" value="ECO:0000250"/>
    <property type="project" value="UniProtKB"/>
</dbReference>
<dbReference type="GO" id="GO:0071332">
    <property type="term" value="P:cellular response to fructose stimulus"/>
    <property type="evidence" value="ECO:0000314"/>
    <property type="project" value="UniProtKB"/>
</dbReference>
<dbReference type="GO" id="GO:0042149">
    <property type="term" value="P:cellular response to glucose starvation"/>
    <property type="evidence" value="ECO:0000314"/>
    <property type="project" value="UniProtKB"/>
</dbReference>
<dbReference type="GO" id="GO:0071333">
    <property type="term" value="P:cellular response to glucose stimulus"/>
    <property type="evidence" value="ECO:0000314"/>
    <property type="project" value="UniProtKB"/>
</dbReference>
<dbReference type="GO" id="GO:0032869">
    <property type="term" value="P:cellular response to insulin stimulus"/>
    <property type="evidence" value="ECO:0000314"/>
    <property type="project" value="UniProtKB"/>
</dbReference>
<dbReference type="GO" id="GO:0071353">
    <property type="term" value="P:cellular response to interleukin-4"/>
    <property type="evidence" value="ECO:0000314"/>
    <property type="project" value="UniProtKB"/>
</dbReference>
<dbReference type="GO" id="GO:0071499">
    <property type="term" value="P:cellular response to laminar fluid shear stress"/>
    <property type="evidence" value="ECO:0000250"/>
    <property type="project" value="UniProtKB"/>
</dbReference>
<dbReference type="GO" id="GO:1990830">
    <property type="term" value="P:cellular response to leukemia inhibitory factor"/>
    <property type="evidence" value="ECO:0000270"/>
    <property type="project" value="MGI"/>
</dbReference>
<dbReference type="GO" id="GO:0071222">
    <property type="term" value="P:cellular response to lipopolysaccharide"/>
    <property type="evidence" value="ECO:0000314"/>
    <property type="project" value="UniProtKB"/>
</dbReference>
<dbReference type="GO" id="GO:0031670">
    <property type="term" value="P:cellular response to nutrient"/>
    <property type="evidence" value="ECO:0000314"/>
    <property type="project" value="UniProtKB"/>
</dbReference>
<dbReference type="GO" id="GO:0034599">
    <property type="term" value="P:cellular response to oxidative stress"/>
    <property type="evidence" value="ECO:0000250"/>
    <property type="project" value="UniProtKB"/>
</dbReference>
<dbReference type="GO" id="GO:0071375">
    <property type="term" value="P:cellular response to peptide hormone stimulus"/>
    <property type="evidence" value="ECO:0000314"/>
    <property type="project" value="UniProtKB"/>
</dbReference>
<dbReference type="GO" id="GO:0035924">
    <property type="term" value="P:cellular response to vascular endothelial growth factor stimulus"/>
    <property type="evidence" value="ECO:0000250"/>
    <property type="project" value="UniProtKB"/>
</dbReference>
<dbReference type="GO" id="GO:0042632">
    <property type="term" value="P:cholesterol homeostasis"/>
    <property type="evidence" value="ECO:0000315"/>
    <property type="project" value="UniProtKB"/>
</dbReference>
<dbReference type="GO" id="GO:0030968">
    <property type="term" value="P:endoplasmic reticulum unfolded protein response"/>
    <property type="evidence" value="ECO:0000314"/>
    <property type="project" value="UniProtKB"/>
</dbReference>
<dbReference type="GO" id="GO:0001935">
    <property type="term" value="P:endothelial cell proliferation"/>
    <property type="evidence" value="ECO:0000315"/>
    <property type="project" value="UniProtKB"/>
</dbReference>
<dbReference type="GO" id="GO:0060691">
    <property type="term" value="P:epithelial cell maturation involved in salivary gland development"/>
    <property type="evidence" value="ECO:0000315"/>
    <property type="project" value="MGI"/>
</dbReference>
<dbReference type="GO" id="GO:0031017">
    <property type="term" value="P:exocrine pancreas development"/>
    <property type="evidence" value="ECO:0000315"/>
    <property type="project" value="MGI"/>
</dbReference>
<dbReference type="GO" id="GO:0055089">
    <property type="term" value="P:fatty acid homeostasis"/>
    <property type="evidence" value="ECO:0000315"/>
    <property type="project" value="UniProtKB"/>
</dbReference>
<dbReference type="GO" id="GO:0002071">
    <property type="term" value="P:glandular epithelial cell maturation"/>
    <property type="evidence" value="ECO:0000315"/>
    <property type="project" value="MGI"/>
</dbReference>
<dbReference type="GO" id="GO:0042593">
    <property type="term" value="P:glucose homeostasis"/>
    <property type="evidence" value="ECO:0000314"/>
    <property type="project" value="MGI"/>
</dbReference>
<dbReference type="GO" id="GO:0035356">
    <property type="term" value="P:intracellular triglyceride homeostasis"/>
    <property type="evidence" value="ECO:0000315"/>
    <property type="project" value="UniProtKB"/>
</dbReference>
<dbReference type="GO" id="GO:0070059">
    <property type="term" value="P:intrinsic apoptotic signaling pathway in response to endoplasmic reticulum stress"/>
    <property type="evidence" value="ECO:0000315"/>
    <property type="project" value="ParkinsonsUK-UCL"/>
</dbReference>
<dbReference type="GO" id="GO:0006629">
    <property type="term" value="P:lipid metabolic process"/>
    <property type="evidence" value="ECO:0007669"/>
    <property type="project" value="UniProtKB-KW"/>
</dbReference>
<dbReference type="GO" id="GO:0001889">
    <property type="term" value="P:liver development"/>
    <property type="evidence" value="ECO:0000315"/>
    <property type="project" value="UniProtKB"/>
</dbReference>
<dbReference type="GO" id="GO:0007517">
    <property type="term" value="P:muscle organ development"/>
    <property type="evidence" value="ECO:0007669"/>
    <property type="project" value="UniProtKB-KW"/>
</dbReference>
<dbReference type="GO" id="GO:0043066">
    <property type="term" value="P:negative regulation of apoptotic process"/>
    <property type="evidence" value="ECO:0000315"/>
    <property type="project" value="UniProtKB"/>
</dbReference>
<dbReference type="GO" id="GO:1902236">
    <property type="term" value="P:negative regulation of endoplasmic reticulum stress-induced intrinsic apoptotic signaling pathway"/>
    <property type="evidence" value="ECO:0007669"/>
    <property type="project" value="Ensembl"/>
</dbReference>
<dbReference type="GO" id="GO:1900102">
    <property type="term" value="P:negative regulation of endoplasmic reticulum unfolded protein response"/>
    <property type="evidence" value="ECO:0000250"/>
    <property type="project" value="UniProtKB"/>
</dbReference>
<dbReference type="GO" id="GO:0010832">
    <property type="term" value="P:negative regulation of myotube differentiation"/>
    <property type="evidence" value="ECO:0000314"/>
    <property type="project" value="UniProtKB"/>
</dbReference>
<dbReference type="GO" id="GO:0000122">
    <property type="term" value="P:negative regulation of transcription by RNA polymerase II"/>
    <property type="evidence" value="ECO:0000250"/>
    <property type="project" value="UniProtKB"/>
</dbReference>
<dbReference type="GO" id="GO:0048666">
    <property type="term" value="P:neuron development"/>
    <property type="evidence" value="ECO:0000314"/>
    <property type="project" value="UniProtKB"/>
</dbReference>
<dbReference type="GO" id="GO:0043491">
    <property type="term" value="P:phosphatidylinositol 3-kinase/protein kinase B signal transduction"/>
    <property type="evidence" value="ECO:0000250"/>
    <property type="project" value="UniProtKB"/>
</dbReference>
<dbReference type="GO" id="GO:0010508">
    <property type="term" value="P:positive regulation of autophagy"/>
    <property type="evidence" value="ECO:0000250"/>
    <property type="project" value="UniProtKB"/>
</dbReference>
<dbReference type="GO" id="GO:0045579">
    <property type="term" value="P:positive regulation of B cell differentiation"/>
    <property type="evidence" value="ECO:0000250"/>
    <property type="project" value="UniProtKB"/>
</dbReference>
<dbReference type="GO" id="GO:0030335">
    <property type="term" value="P:positive regulation of cell migration"/>
    <property type="evidence" value="ECO:0007669"/>
    <property type="project" value="Ensembl"/>
</dbReference>
<dbReference type="GO" id="GO:2000353">
    <property type="term" value="P:positive regulation of endothelial cell apoptotic process"/>
    <property type="evidence" value="ECO:0000250"/>
    <property type="project" value="UniProtKB"/>
</dbReference>
<dbReference type="GO" id="GO:0045600">
    <property type="term" value="P:positive regulation of fat cell differentiation"/>
    <property type="evidence" value="ECO:0000315"/>
    <property type="project" value="UniProtKB"/>
</dbReference>
<dbReference type="GO" id="GO:2000347">
    <property type="term" value="P:positive regulation of hepatocyte proliferation"/>
    <property type="evidence" value="ECO:0000315"/>
    <property type="project" value="UniProtKB"/>
</dbReference>
<dbReference type="GO" id="GO:0002639">
    <property type="term" value="P:positive regulation of immunoglobulin production"/>
    <property type="evidence" value="ECO:0000314"/>
    <property type="project" value="UniProtKB"/>
</dbReference>
<dbReference type="GO" id="GO:0032755">
    <property type="term" value="P:positive regulation of interleukin-6 production"/>
    <property type="evidence" value="ECO:0000314"/>
    <property type="project" value="UniProtKB"/>
</dbReference>
<dbReference type="GO" id="GO:1903489">
    <property type="term" value="P:positive regulation of lactation"/>
    <property type="evidence" value="ECO:0000315"/>
    <property type="project" value="UniProtKB"/>
</dbReference>
<dbReference type="GO" id="GO:0045348">
    <property type="term" value="P:positive regulation of MHC class II biosynthetic process"/>
    <property type="evidence" value="ECO:0000250"/>
    <property type="project" value="UniProtKB"/>
</dbReference>
<dbReference type="GO" id="GO:1900100">
    <property type="term" value="P:positive regulation of plasma cell differentiation"/>
    <property type="evidence" value="ECO:0000250"/>
    <property type="project" value="UniProtKB"/>
</dbReference>
<dbReference type="GO" id="GO:1901800">
    <property type="term" value="P:positive regulation of proteasomal protein catabolic process"/>
    <property type="evidence" value="ECO:0000314"/>
    <property type="project" value="MGI"/>
</dbReference>
<dbReference type="GO" id="GO:1901985">
    <property type="term" value="P:positive regulation of protein acetylation"/>
    <property type="evidence" value="ECO:0000250"/>
    <property type="project" value="UniProtKB"/>
</dbReference>
<dbReference type="GO" id="GO:0042307">
    <property type="term" value="P:positive regulation of protein import into nucleus"/>
    <property type="evidence" value="ECO:0000250"/>
    <property type="project" value="UniProtKB"/>
</dbReference>
<dbReference type="GO" id="GO:0001934">
    <property type="term" value="P:positive regulation of protein phosphorylation"/>
    <property type="evidence" value="ECO:0000250"/>
    <property type="project" value="UniProtKB"/>
</dbReference>
<dbReference type="GO" id="GO:0045582">
    <property type="term" value="P:positive regulation of T cell differentiation"/>
    <property type="evidence" value="ECO:0000250"/>
    <property type="project" value="UniProtKB"/>
</dbReference>
<dbReference type="GO" id="GO:0032008">
    <property type="term" value="P:positive regulation of TOR signaling"/>
    <property type="evidence" value="ECO:0000250"/>
    <property type="project" value="UniProtKB"/>
</dbReference>
<dbReference type="GO" id="GO:0045944">
    <property type="term" value="P:positive regulation of transcription by RNA polymerase II"/>
    <property type="evidence" value="ECO:0000314"/>
    <property type="project" value="UniProtKB"/>
</dbReference>
<dbReference type="GO" id="GO:0035470">
    <property type="term" value="P:positive regulation of vascular wound healing"/>
    <property type="evidence" value="ECO:0007669"/>
    <property type="project" value="Ensembl"/>
</dbReference>
<dbReference type="GO" id="GO:0031648">
    <property type="term" value="P:protein destabilization"/>
    <property type="evidence" value="ECO:0000315"/>
    <property type="project" value="UniProtKB"/>
</dbReference>
<dbReference type="GO" id="GO:0015031">
    <property type="term" value="P:protein transport"/>
    <property type="evidence" value="ECO:0007669"/>
    <property type="project" value="UniProtKB-KW"/>
</dbReference>
<dbReference type="GO" id="GO:0010506">
    <property type="term" value="P:regulation of autophagy"/>
    <property type="evidence" value="ECO:0000315"/>
    <property type="project" value="UniProtKB"/>
</dbReference>
<dbReference type="GO" id="GO:0001558">
    <property type="term" value="P:regulation of cell growth"/>
    <property type="evidence" value="ECO:0000250"/>
    <property type="project" value="UniProtKB"/>
</dbReference>
<dbReference type="GO" id="GO:0031647">
    <property type="term" value="P:regulation of protein stability"/>
    <property type="evidence" value="ECO:0000250"/>
    <property type="project" value="UniProtKB"/>
</dbReference>
<dbReference type="GO" id="GO:0006357">
    <property type="term" value="P:regulation of transcription by RNA polymerase II"/>
    <property type="evidence" value="ECO:0000314"/>
    <property type="project" value="UniProtKB"/>
</dbReference>
<dbReference type="GO" id="GO:0034976">
    <property type="term" value="P:response to endoplasmic reticulum stress"/>
    <property type="evidence" value="ECO:0000314"/>
    <property type="project" value="UniProtKB"/>
</dbReference>
<dbReference type="GO" id="GO:1990418">
    <property type="term" value="P:response to insulin-like growth factor stimulus"/>
    <property type="evidence" value="ECO:0000314"/>
    <property type="project" value="UniProtKB"/>
</dbReference>
<dbReference type="GO" id="GO:0055092">
    <property type="term" value="P:sterol homeostasis"/>
    <property type="evidence" value="ECO:0000315"/>
    <property type="project" value="UniProtKB"/>
</dbReference>
<dbReference type="GO" id="GO:0006366">
    <property type="term" value="P:transcription by RNA polymerase II"/>
    <property type="evidence" value="ECO:0000314"/>
    <property type="project" value="UniProtKB"/>
</dbReference>
<dbReference type="GO" id="GO:0006511">
    <property type="term" value="P:ubiquitin-dependent protein catabolic process"/>
    <property type="evidence" value="ECO:0000315"/>
    <property type="project" value="UniProtKB"/>
</dbReference>
<dbReference type="GO" id="GO:0048010">
    <property type="term" value="P:vascular endothelial growth factor receptor signaling pathway"/>
    <property type="evidence" value="ECO:0000250"/>
    <property type="project" value="UniProtKB"/>
</dbReference>
<dbReference type="CDD" id="cd14691">
    <property type="entry name" value="bZIP_XBP1"/>
    <property type="match status" value="1"/>
</dbReference>
<dbReference type="FunFam" id="1.20.5.170:FF:000049">
    <property type="entry name" value="X-box binding protein 1"/>
    <property type="match status" value="1"/>
</dbReference>
<dbReference type="Gene3D" id="1.20.5.170">
    <property type="match status" value="1"/>
</dbReference>
<dbReference type="InterPro" id="IPR004827">
    <property type="entry name" value="bZIP"/>
</dbReference>
<dbReference type="InterPro" id="IPR046347">
    <property type="entry name" value="bZIP_sf"/>
</dbReference>
<dbReference type="InterPro" id="IPR052470">
    <property type="entry name" value="ER_Stress-Reg_TF"/>
</dbReference>
<dbReference type="PANTHER" id="PTHR46542">
    <property type="entry name" value="X-BOX BINDING PROTEIN 1"/>
    <property type="match status" value="1"/>
</dbReference>
<dbReference type="PANTHER" id="PTHR46542:SF3">
    <property type="entry name" value="X-BOX-BINDING PROTEIN 1"/>
    <property type="match status" value="1"/>
</dbReference>
<dbReference type="Pfam" id="PF00170">
    <property type="entry name" value="bZIP_1"/>
    <property type="match status" value="1"/>
</dbReference>
<dbReference type="SMART" id="SM00338">
    <property type="entry name" value="BRLZ"/>
    <property type="match status" value="1"/>
</dbReference>
<dbReference type="SUPFAM" id="SSF57959">
    <property type="entry name" value="Leucine zipper domain"/>
    <property type="match status" value="1"/>
</dbReference>
<dbReference type="PROSITE" id="PS50217">
    <property type="entry name" value="BZIP"/>
    <property type="match status" value="1"/>
</dbReference>
<dbReference type="PROSITE" id="PS00036">
    <property type="entry name" value="BZIP_BASIC"/>
    <property type="match status" value="1"/>
</dbReference>
<evidence type="ECO:0000250" key="1">
    <source>
        <dbReference type="UniProtKB" id="P17861"/>
    </source>
</evidence>
<evidence type="ECO:0000255" key="2"/>
<evidence type="ECO:0000255" key="3">
    <source>
        <dbReference type="PROSITE-ProRule" id="PRU00978"/>
    </source>
</evidence>
<evidence type="ECO:0000256" key="4">
    <source>
        <dbReference type="SAM" id="MobiDB-lite"/>
    </source>
</evidence>
<evidence type="ECO:0000269" key="5">
    <source>
    </source>
</evidence>
<evidence type="ECO:0000269" key="6">
    <source>
    </source>
</evidence>
<evidence type="ECO:0000269" key="7">
    <source>
    </source>
</evidence>
<evidence type="ECO:0000269" key="8">
    <source>
    </source>
</evidence>
<evidence type="ECO:0000269" key="9">
    <source>
    </source>
</evidence>
<evidence type="ECO:0000269" key="10">
    <source>
    </source>
</evidence>
<evidence type="ECO:0000269" key="11">
    <source>
    </source>
</evidence>
<evidence type="ECO:0000269" key="12">
    <source>
    </source>
</evidence>
<evidence type="ECO:0000269" key="13">
    <source>
    </source>
</evidence>
<evidence type="ECO:0000269" key="14">
    <source>
    </source>
</evidence>
<evidence type="ECO:0000269" key="15">
    <source>
    </source>
</evidence>
<evidence type="ECO:0000269" key="16">
    <source>
    </source>
</evidence>
<evidence type="ECO:0000269" key="17">
    <source>
    </source>
</evidence>
<evidence type="ECO:0000269" key="18">
    <source>
    </source>
</evidence>
<evidence type="ECO:0000269" key="19">
    <source>
    </source>
</evidence>
<evidence type="ECO:0000269" key="20">
    <source>
    </source>
</evidence>
<evidence type="ECO:0000269" key="21">
    <source>
    </source>
</evidence>
<evidence type="ECO:0000269" key="22">
    <source>
    </source>
</evidence>
<evidence type="ECO:0000269" key="23">
    <source>
    </source>
</evidence>
<evidence type="ECO:0000269" key="24">
    <source>
    </source>
</evidence>
<evidence type="ECO:0000269" key="25">
    <source>
    </source>
</evidence>
<evidence type="ECO:0000269" key="26">
    <source>
    </source>
</evidence>
<evidence type="ECO:0000269" key="27">
    <source>
    </source>
</evidence>
<evidence type="ECO:0000269" key="28">
    <source>
    </source>
</evidence>
<evidence type="ECO:0000303" key="29">
    <source>
    </source>
</evidence>
<evidence type="ECO:0000303" key="30">
    <source>
    </source>
</evidence>
<evidence type="ECO:0000305" key="31"/>
<evidence type="ECO:0000305" key="32">
    <source>
    </source>
</evidence>
<evidence type="ECO:0000312" key="33">
    <source>
        <dbReference type="MGI" id="MGI:98970"/>
    </source>
</evidence>
<reference key="1">
    <citation type="journal article" date="2000" name="DNA Res.">
        <title>Isolation and characterization of the gene encoding mouse tax-responsive element-binding protein (TREB) 5.</title>
        <authorList>
            <person name="Masaki T."/>
            <person name="Noguchi H."/>
            <person name="Kobayashi M."/>
            <person name="Yoshida M."/>
            <person name="Takamatsu K."/>
        </authorList>
    </citation>
    <scope>NUCLEOTIDE SEQUENCE [GENOMIC DNA]</scope>
</reference>
<reference key="2">
    <citation type="journal article" date="2002" name="Nature">
        <title>IRE1 couples endoplasmic reticulum load to secretory capacity by processing the XBP-1 mRNA.</title>
        <authorList>
            <person name="Calfon M."/>
            <person name="Zeng H."/>
            <person name="Urano F."/>
            <person name="Till J.H."/>
            <person name="Hubbard S.R."/>
            <person name="Harding H.P."/>
            <person name="Clark S.G."/>
            <person name="Ron D."/>
        </authorList>
    </citation>
    <scope>NUCLEOTIDE SEQUENCE [MRNA] (ISOFORM 2)</scope>
    <scope>ALTERNATIVE SPLICING (ISOFORM 2)</scope>
    <scope>INDUCTION (ISOFORM 2)</scope>
    <scope>ER STRESS-MEDIATED DOWN-REGULATION (ISOFORM 1)</scope>
    <source>
        <strain>129/SvEv</strain>
    </source>
</reference>
<reference key="3">
    <citation type="submission" date="2001-04" db="EMBL/GenBank/DDBJ databases">
        <title>Sequence analysis of murine XBP-1.</title>
        <authorList>
            <person name="Lee C.M."/>
            <person name="Reddy E.P."/>
        </authorList>
    </citation>
    <scope>NUCLEOTIDE SEQUENCE [MRNA] (ISOFORM 1)</scope>
</reference>
<reference key="4">
    <citation type="journal article" date="2009" name="PLoS Biol.">
        <title>Lineage-specific biology revealed by a finished genome assembly of the mouse.</title>
        <authorList>
            <person name="Church D.M."/>
            <person name="Goodstadt L."/>
            <person name="Hillier L.W."/>
            <person name="Zody M.C."/>
            <person name="Goldstein S."/>
            <person name="She X."/>
            <person name="Bult C.J."/>
            <person name="Agarwala R."/>
            <person name="Cherry J.L."/>
            <person name="DiCuccio M."/>
            <person name="Hlavina W."/>
            <person name="Kapustin Y."/>
            <person name="Meric P."/>
            <person name="Maglott D."/>
            <person name="Birtle Z."/>
            <person name="Marques A.C."/>
            <person name="Graves T."/>
            <person name="Zhou S."/>
            <person name="Teague B."/>
            <person name="Potamousis K."/>
            <person name="Churas C."/>
            <person name="Place M."/>
            <person name="Herschleb J."/>
            <person name="Runnheim R."/>
            <person name="Forrest D."/>
            <person name="Amos-Landgraf J."/>
            <person name="Schwartz D.C."/>
            <person name="Cheng Z."/>
            <person name="Lindblad-Toh K."/>
            <person name="Eichler E.E."/>
            <person name="Ponting C.P."/>
        </authorList>
    </citation>
    <scope>NUCLEOTIDE SEQUENCE [LARGE SCALE GENOMIC DNA]</scope>
    <source>
        <strain>C57BL/6J</strain>
    </source>
</reference>
<reference key="5">
    <citation type="journal article" date="2004" name="Genome Res.">
        <title>The status, quality, and expansion of the NIH full-length cDNA project: the Mammalian Gene Collection (MGC).</title>
        <authorList>
            <consortium name="The MGC Project Team"/>
        </authorList>
    </citation>
    <scope>NUCLEOTIDE SEQUENCE [LARGE SCALE MRNA] (ISOFORM 1)</scope>
    <source>
        <strain>FVB/N</strain>
        <tissue>Mammary tumor</tissue>
    </source>
</reference>
<reference key="6">
    <citation type="journal article" date="1993" name="Dev. Dyn.">
        <title>In situ hybridization studies suggest a role for the basic region-leucine zipper protein hXBP-1 in exocrine gland and skeletal development during mouse embryogenesis.</title>
        <authorList>
            <person name="Clauss I.M."/>
            <person name="Gravallese E.M."/>
            <person name="Darling J.M."/>
            <person name="Shapiro F."/>
            <person name="Glimcher M.J."/>
            <person name="Glimcher L.H."/>
        </authorList>
    </citation>
    <scope>DEVELOPMENTAL STAGE</scope>
</reference>
<reference key="7">
    <citation type="journal article" date="1999" name="Biochem. Biophys. Res. Commun.">
        <title>Targeted disruption of CRE-binding factor TREB5 gene leads to cellular necrosis in cardiac myocytes at the embryonic stage.</title>
        <authorList>
            <person name="Masaki T."/>
            <person name="Yoshida M."/>
            <person name="Noguchi S."/>
        </authorList>
    </citation>
    <scope>FUNCTION</scope>
    <scope>DISRUPTION PHENOTYPE</scope>
</reference>
<reference key="8">
    <citation type="journal article" date="2000" name="Genes Dev.">
        <title>An essential role in liver development for transcription factor XBP-1.</title>
        <authorList>
            <person name="Reimold A.M."/>
            <person name="Etkin A."/>
            <person name="Clauss I."/>
            <person name="Perkins A."/>
            <person name="Friend D.S."/>
            <person name="Zhang J."/>
            <person name="Horton H.F."/>
            <person name="Scott A."/>
            <person name="Orkin S.H."/>
            <person name="Byrne M.C."/>
            <person name="Grusby M.J."/>
            <person name="Glimcher L.H."/>
        </authorList>
    </citation>
    <scope>FUNCTION</scope>
    <scope>DISRUPTION PHENOTYPE</scope>
</reference>
<reference key="9">
    <citation type="journal article" date="2002" name="Genes Dev.">
        <title>IRE1-mediated unconventional mRNA splicing and S2P-mediated ATF6 cleavage merge to regulate XBP1 in signaling the unfolded protein response.</title>
        <authorList>
            <person name="Lee K."/>
            <person name="Tirasophon W."/>
            <person name="Shen X."/>
            <person name="Michalak M."/>
            <person name="Prywes R."/>
            <person name="Okada T."/>
            <person name="Yoshida H."/>
            <person name="Mori K."/>
            <person name="Kaufman R.J."/>
        </authorList>
    </citation>
    <scope>FUNCTION (ISOFORM 2)</scope>
    <scope>ALTERNATIVE SPLICING (ISOFORM 2)</scope>
    <scope>INDUCTION (ISOFORM 2)</scope>
</reference>
<reference key="10">
    <citation type="journal article" date="2003" name="Mol. Cell. Biol.">
        <title>XBP-1 regulates a subset of endoplasmic reticulum resident chaperone genes in the unfolded protein response.</title>
        <authorList>
            <person name="Lee A.H."/>
            <person name="Iwakoshi N.N."/>
            <person name="Glimcher L.H."/>
        </authorList>
    </citation>
    <scope>FUNCTION (ISOFORM 2)</scope>
</reference>
<reference key="11">
    <citation type="journal article" date="2003" name="Nat. Immunol.">
        <title>Plasma cell differentiation and the unfolded protein response intersect at the transcription factor XBP-1.</title>
        <authorList>
            <person name="Iwakoshi N.N."/>
            <person name="Lee A.-H."/>
            <person name="Vallabhajosyula P."/>
            <person name="Otipoby K.L."/>
            <person name="Rajewsky K."/>
            <person name="Glimcher L.H."/>
        </authorList>
    </citation>
    <scope>FUNCTION (ISOFORM 2)</scope>
    <scope>INDUCTION (ISOFORMS 1 AND 2)</scope>
</reference>
<reference key="12">
    <citation type="journal article" date="2003" name="Proc. Natl. Acad. Sci. U.S.A.">
        <title>Proteasome inhibitors disrupt the unfolded protein response in myeloma cells.</title>
        <authorList>
            <person name="Lee A.H."/>
            <person name="Iwakoshi N.N."/>
            <person name="Anderson K.C."/>
            <person name="Glimcher L.H."/>
        </authorList>
    </citation>
    <scope>FUNCTION (ISOFORMS 1 AND 2)</scope>
    <scope>UBIQUITINATION (ISOFORM 1)</scope>
    <scope>MUTAGENESIS OF LYS-231 AND LYS-252</scope>
</reference>
<reference key="13">
    <citation type="journal article" date="2004" name="Science">
        <title>Endoplasmic reticulum stress links obesity, insulin action, and type 2 diabetes.</title>
        <authorList>
            <person name="Ozcan U."/>
            <person name="Cao Q."/>
            <person name="Yilmaz E."/>
            <person name="Lee A.H."/>
            <person name="Iwakoshi N.N."/>
            <person name="Ozdelen E."/>
            <person name="Tuncman G."/>
            <person name="Gorgun C."/>
            <person name="Glimcher L.H."/>
            <person name="Hotamisligil G.S."/>
        </authorList>
    </citation>
    <scope>FUNCTION</scope>
    <scope>DISRUPTION PHENOTYPE</scope>
</reference>
<reference key="14">
    <citation type="journal article" date="2005" name="EMBO J.">
        <title>XBP-1 is required for biogenesis of cellular secretory machinery of exocrine glands.</title>
        <authorList>
            <person name="Lee A.H."/>
            <person name="Chu G.C."/>
            <person name="Iwakoshi N.N."/>
            <person name="Glimcher L.H."/>
        </authorList>
    </citation>
    <scope>FUNCTION</scope>
    <scope>DISRUPTION PHENOTYPE</scope>
</reference>
<reference key="15">
    <citation type="journal article" date="2006" name="J. Biol. Chem.">
        <title>Rapid turnover of unspliced Xbp-1 as a factor that modulates the unfolded protein response.</title>
        <authorList>
            <person name="Tirosh B."/>
            <person name="Iwakoshi N.N."/>
            <person name="Glimcher L.H."/>
            <person name="Ploegh H.L."/>
        </authorList>
    </citation>
    <scope>FUNCTION (ISOFORM 1)</scope>
    <scope>UBIQUITINATION (ISOFORM 1)</scope>
    <scope>SUBCELLULAR LOCATION (ISOFORMS 1 AND 2)</scope>
    <scope>DOMAIN (ISOFORMS 1 AND 2)</scope>
    <scope>MUTAGENESIS OF 177-PRO-PRO-178; LYS-231; 238-PRO-PRO-239 AND LYS-252</scope>
</reference>
<reference key="16">
    <citation type="journal article" date="2007" name="J. Biol. Chem.">
        <title>Coordinate regulation of phospholipid biosynthesis and secretory pathway gene expression in XBP-1(S)-induced endoplasmic reticulum biogenesis.</title>
        <authorList>
            <person name="Sriburi R."/>
            <person name="Bommiasamy H."/>
            <person name="Buldak G.L."/>
            <person name="Robbins G.R."/>
            <person name="Frank M."/>
            <person name="Jackowski S."/>
            <person name="Brewer J.W."/>
        </authorList>
    </citation>
    <scope>FUNCTION (ISOFORM 2)</scope>
</reference>
<reference key="17">
    <citation type="journal article" date="2007" name="Mol. Cell">
        <title>XBP1 controls diverse cell type- and condition-specific transcriptional regulatory networks.</title>
        <authorList>
            <person name="Acosta-Alvear D."/>
            <person name="Zhou Y."/>
            <person name="Blais A."/>
            <person name="Tsikitis M."/>
            <person name="Lents N.H."/>
            <person name="Arias C."/>
            <person name="Lennon C.J."/>
            <person name="Kluger Y."/>
            <person name="Dynlacht B.D."/>
        </authorList>
    </citation>
    <scope>FUNCTION</scope>
    <scope>DNA-BINDING</scope>
    <scope>INDUCTION (ISOFORM 2)</scope>
    <scope>TISSUE SPECIFICITY</scope>
</reference>
<reference key="18">
    <citation type="journal article" date="2008" name="Cell">
        <title>XBP1 links ER stress to intestinal inflammation and confers genetic risk for human inflammatory bowel disease.</title>
        <authorList>
            <person name="Kaser A."/>
            <person name="Lee A.H."/>
            <person name="Franke A."/>
            <person name="Glickman J.N."/>
            <person name="Zeissig S."/>
            <person name="Tilg H."/>
            <person name="Nieuwenhuis E.E."/>
            <person name="Higgins D.E."/>
            <person name="Schreiber S."/>
            <person name="Glimcher L.H."/>
            <person name="Blumberg R.S."/>
        </authorList>
    </citation>
    <scope>DISRUPTION PHENOTYPE</scope>
    <scope>CONDITIONAL KNOCKOUTS</scope>
</reference>
<reference key="19">
    <citation type="journal article" date="2008" name="Science">
        <title>Regulation of hepatic lipogenesis by the transcription factor XBP1.</title>
        <authorList>
            <person name="Lee A.H."/>
            <person name="Scapa E.F."/>
            <person name="Cohen D.E."/>
            <person name="Glimcher L.H."/>
        </authorList>
    </citation>
    <scope>FUNCTION (ISOFORM 2)</scope>
    <scope>SUBCELLULAR LOCATION (ISOFORM 2)</scope>
    <scope>INDUCTION (ISOFORM 2)</scope>
    <scope>DISRUPTION PHENOTYPE</scope>
    <scope>CONDITIONAL KNOCKOUT</scope>
</reference>
<reference key="20">
    <citation type="journal article" date="2009" name="Proc. Natl. Acad. Sci. U.S.A.">
        <title>Sustained activation of XBP1 splicing leads to endothelial apoptosis and atherosclerosis development in response to disturbed flow.</title>
        <authorList>
            <person name="Zeng L."/>
            <person name="Zampetaki A."/>
            <person name="Margariti A."/>
            <person name="Pepe A.E."/>
            <person name="Alam S."/>
            <person name="Martin D."/>
            <person name="Xiao Q."/>
            <person name="Wang W."/>
            <person name="Jin Z.G."/>
            <person name="Cockerill G."/>
            <person name="Mori K."/>
            <person name="Li Y.S."/>
            <person name="Hu Y."/>
            <person name="Chien S."/>
            <person name="Xu Q."/>
        </authorList>
    </citation>
    <scope>TISSUE SPECIFICITY (ISOFORMS 1 AND 2)</scope>
</reference>
<reference key="21">
    <citation type="journal article" date="2010" name="Nat. Med.">
        <title>The regulatory subunits of PI3K, p85alpha and p85beta, interact with XBP-1 and increase its nuclear translocation.</title>
        <authorList>
            <person name="Park S.W."/>
            <person name="Zhou Y."/>
            <person name="Lee J."/>
            <person name="Lu A."/>
            <person name="Sun C."/>
            <person name="Chung J."/>
            <person name="Ueki K."/>
            <person name="Ozcan U."/>
        </authorList>
    </citation>
    <scope>FUNCTION (ISOFORM 2)</scope>
    <scope>INTERACTION WITH PIK3R1 AND PIK3R2 (ISOFORM 2)</scope>
    <scope>SUBCELLULAR LOCATION (ISOFORM 2)</scope>
    <scope>INDUCTION (ISOFORM 2)</scope>
</reference>
<reference key="22">
    <citation type="journal article" date="2011" name="Biochem. J.">
        <title>Regulation of unfolded protein response modulator XBP1s by acetylation and deacetylation.</title>
        <authorList>
            <person name="Wang F.M."/>
            <person name="Chen Y.J."/>
            <person name="Ouyang H.J."/>
        </authorList>
    </citation>
    <scope>ACETYLATION BY EP300 (ISOFORM 2)</scope>
    <scope>DEACETYLATION BY SIRT1 (ISOFORM 2)</scope>
    <scope>SUBCELLULAR LOCATION (ISOFORM 2)</scope>
    <scope>INTERACTION WITH SIRT1 (ISOFORM 2)</scope>
</reference>
<reference key="23">
    <citation type="journal article" date="2011" name="Nat. Med.">
        <title>Regulation of glucose homeostasis through a XBP-1-FoxO1 interaction.</title>
        <authorList>
            <person name="Zhou Y."/>
            <person name="Lee J."/>
            <person name="Reno C.M."/>
            <person name="Sun C."/>
            <person name="Park S.W."/>
            <person name="Chung J."/>
            <person name="Lee J."/>
            <person name="Fisher S.J."/>
            <person name="White M.F."/>
            <person name="Biddinger S.B."/>
            <person name="Ozcan U."/>
        </authorList>
    </citation>
    <scope>FUNCTION (ISOFORM 2)</scope>
    <scope>INTERACTION WITH FOXO1 (ISOFORM 2)</scope>
</reference>
<reference key="24">
    <citation type="journal article" date="2013" name="Cell Rep.">
        <title>The role of adipocyte XBP1 in metabolic regulation during lactation.</title>
        <authorList>
            <person name="Gregor M.F."/>
            <person name="Misch E.S."/>
            <person name="Yang L."/>
            <person name="Hummasti S."/>
            <person name="Inouye K.E."/>
            <person name="Lee A.H."/>
            <person name="Bierie B."/>
            <person name="Hotamisligil G.S."/>
        </authorList>
    </citation>
    <scope>FUNCTION (ISOFORM 2)</scope>
    <scope>DISRUPTION PHENOTYPE</scope>
    <scope>CONDITIONAL KNOCKOUT</scope>
    <scope>TISSUE SPECIFICITY (ISOFORMS 1 AND 2)</scope>
    <scope>INDUCTION (ISOFORMS 1 AND 2)</scope>
</reference>
<reference key="25">
    <citation type="journal article" date="2013" name="Circulation">
        <title>Vascular endothelial cell growth-activated XBP1 splicing in endothelial cells is crucial for angiogenesis.</title>
        <authorList>
            <person name="Zeng L."/>
            <person name="Xiao Q."/>
            <person name="Chen M."/>
            <person name="Margariti A."/>
            <person name="Martin D."/>
            <person name="Ivetic A."/>
            <person name="Xu H."/>
            <person name="Mason J."/>
            <person name="Wang W."/>
            <person name="Cockerill G."/>
            <person name="Mori K."/>
            <person name="Li J.Y."/>
            <person name="Chien S."/>
            <person name="Hu Y."/>
            <person name="Xu Q."/>
        </authorList>
    </citation>
    <scope>FUNCTION</scope>
    <scope>DISRUPTION PHENOTYPE</scope>
    <scope>CONDITIONAL KNOCKOUT</scope>
</reference>
<reference key="26">
    <citation type="journal article" date="2013" name="J. Biol. Chem.">
        <title>XBP1 mRNA splicing triggers an autophagic response in endothelial cells through BECLIN-1 transcriptional activation.</title>
        <authorList>
            <person name="Margariti A."/>
            <person name="Li H."/>
            <person name="Chen T."/>
            <person name="Martin D."/>
            <person name="Vizcay-Barrena G."/>
            <person name="Alam S."/>
            <person name="Karamariti E."/>
            <person name="Xiao Q."/>
            <person name="Zampetaki A."/>
            <person name="Zhang Z."/>
            <person name="Wang W."/>
            <person name="Jiang Z."/>
            <person name="Gao C."/>
            <person name="Ma B."/>
            <person name="Chen Y.G."/>
            <person name="Cockerill G."/>
            <person name="Hu Y."/>
            <person name="Xu Q."/>
            <person name="Zeng L."/>
        </authorList>
    </citation>
    <scope>DISRUPTION PHENOTYPE</scope>
    <scope>CONDITIONAL KNOCKOUT</scope>
</reference>
<reference key="27">
    <citation type="journal article" date="2014" name="FEBS J.">
        <title>X-box binding protein 1 is a novel key regulator of peroxisome proliferator-activated receptor gamma2.</title>
        <authorList>
            <person name="Cho Y.M."/>
            <person name="Kwak S.N."/>
            <person name="Joo N.S."/>
            <person name="Kim D.H."/>
            <person name="Lee A.H."/>
            <person name="Kim K.S."/>
            <person name="Seo J.B."/>
            <person name="Jeong S.W."/>
            <person name="Kwon O.J."/>
        </authorList>
    </citation>
    <scope>FUNCTION (ISOFORM 2)</scope>
    <scope>DNA-BINDING (ISOFORM 2)</scope>
    <scope>INDUCTION (ISOFORM 2)</scope>
</reference>
<reference key="28">
    <citation type="journal article" date="2014" name="Proc. Natl. Acad. Sci. U.S.A.">
        <title>Control of dopaminergic neuron survival by the unfolded protein response transcription factor XBP1.</title>
        <authorList>
            <person name="Valdes P."/>
            <person name="Mercado G."/>
            <person name="Vidal R.L."/>
            <person name="Molina C."/>
            <person name="Parsons G."/>
            <person name="Court F.A."/>
            <person name="Martinez A."/>
            <person name="Galleguillos D."/>
            <person name="Armentano D."/>
            <person name="Schneider B.L."/>
            <person name="Hetz C."/>
        </authorList>
    </citation>
    <scope>FUNCTION (ISOFORM 2)</scope>
    <scope>DISRUPTION PHENOTYPE</scope>
    <scope>CONDITIONAL KNOCKOUT</scope>
</reference>
<feature type="chain" id="PRO_0000076544" description="X-box-binding protein 1">
    <location>
        <begin position="1"/>
        <end position="267"/>
    </location>
</feature>
<feature type="chain" id="PRO_0000431893" description="X-box-binding protein 1, cytoplasmic form" evidence="1">
    <location>
        <begin position="1"/>
        <end position="188"/>
    </location>
</feature>
<feature type="chain" id="PRO_0000431894" description="X-box-binding protein 1, luminal form" evidence="1">
    <location>
        <begin position="191"/>
        <end position="267"/>
    </location>
</feature>
<feature type="topological domain" description="Cytoplasmic" evidence="1">
    <location>
        <begin position="1"/>
        <end position="180"/>
    </location>
</feature>
<feature type="transmembrane region" description="Helical; Signal-anchor for type II membrane protein" evidence="1 2">
    <location>
        <begin position="181"/>
        <end position="198"/>
    </location>
</feature>
<feature type="topological domain" description="Lumenal" evidence="1">
    <location>
        <begin position="199"/>
        <end position="267"/>
    </location>
</feature>
<feature type="domain" description="bZIP" evidence="3">
    <location>
        <begin position="63"/>
        <end position="126"/>
    </location>
</feature>
<feature type="region of interest" description="Disordered" evidence="4">
    <location>
        <begin position="35"/>
        <end position="56"/>
    </location>
</feature>
<feature type="region of interest" description="Basic motif" evidence="3">
    <location>
        <begin position="65"/>
        <end position="87"/>
    </location>
</feature>
<feature type="region of interest" description="Nuclear localization signal (NLS)" evidence="1">
    <location>
        <begin position="69"/>
        <end position="85"/>
    </location>
</feature>
<feature type="region of interest" description="Leucine-zipper" evidence="3">
    <location>
        <begin position="91"/>
        <end position="126"/>
    </location>
</feature>
<feature type="region of interest" description="Necessary for the translational pausing of its own mRNA" evidence="1">
    <location>
        <begin position="230"/>
        <end position="256"/>
    </location>
</feature>
<feature type="site" description="Cleavage; by HM13/SPP" evidence="1">
    <location>
        <begin position="185"/>
        <end position="186"/>
    </location>
</feature>
<feature type="modified residue" description="Phosphoserine" evidence="1">
    <location>
        <position position="61"/>
    </location>
</feature>
<feature type="splice variant" id="VSP_012937" description="In isoform 2." evidence="30">
    <original>LRLCAPLQQVQAQLSPPQNIFPWTLTLLPLQILSLISFWAFWTSWTLSCFSNVLPQSLLVWRNSQRSTQKDLVPYQPPFLCQWGPHQPSWKPLMNSFVLTMYTPSL</original>
    <variation>GAGPVVTSPEHLPMDSDTVASSDSESDILLGILDKLDPVMFFKCPSPESASLEELPEVYPEGPSSLPASLSLSVGTSSAKLEAINELIRFDHVYTKPLVLEIPSETESQTNVVVKIEEAPLSSSEEDHPEFIVSVKKEPLEDDFIPELGISNLLSSSHCLRPPSCLLDAHSDCGYEGSPSPFSDMSSPLGTDHSWEDTFANELFPQLISV</variation>
    <location>
        <begin position="162"/>
        <end position="267"/>
    </location>
</feature>
<feature type="mutagenesis site" description="Reduced degradation; when associated with 238-L-H-239." evidence="13">
    <original>PP</original>
    <variation>LH</variation>
    <location>
        <begin position="177"/>
        <end position="178"/>
    </location>
</feature>
<feature type="mutagenesis site" description="Enhanced stability and accumulation in the cytoplasm; when associated with R-252." evidence="10 13">
    <original>K</original>
    <variation>R</variation>
    <location>
        <position position="231"/>
    </location>
</feature>
<feature type="mutagenesis site" description="Reduced degradation; when associated with 177-L-H-178." evidence="13">
    <original>PP</original>
    <variation>LH</variation>
    <location>
        <begin position="238"/>
        <end position="239"/>
    </location>
</feature>
<feature type="mutagenesis site" description="Enhanced stability and accumulation in the cytoplasm; when associated with R-231." evidence="10 13">
    <original>K</original>
    <variation>R</variation>
    <location>
        <position position="252"/>
    </location>
</feature>
<feature type="sequence conflict" description="In Ref. 1; BAB13793." evidence="31" ref="1">
    <location>
        <position position="27"/>
    </location>
</feature>